<reference key="1">
    <citation type="journal article" date="2008" name="Chem. Biol. Interact.">
        <title>Extending the Bacillus cereus group genomics to putative food-borne pathogens of different toxicity.</title>
        <authorList>
            <person name="Lapidus A."/>
            <person name="Goltsman E."/>
            <person name="Auger S."/>
            <person name="Galleron N."/>
            <person name="Segurens B."/>
            <person name="Dossat C."/>
            <person name="Land M.L."/>
            <person name="Broussolle V."/>
            <person name="Brillard J."/>
            <person name="Guinebretiere M.-H."/>
            <person name="Sanchis V."/>
            <person name="Nguen-the C."/>
            <person name="Lereclus D."/>
            <person name="Richardson P."/>
            <person name="Wincker P."/>
            <person name="Weissenbach J."/>
            <person name="Ehrlich S.D."/>
            <person name="Sorokin A."/>
        </authorList>
    </citation>
    <scope>NUCLEOTIDE SEQUENCE [LARGE SCALE GENOMIC DNA]</scope>
    <source>
        <strain>DSM 22905 / CIP 110041 / 391-98 / NVH 391-98</strain>
    </source>
</reference>
<dbReference type="EC" id="2.4.2.22" evidence="1"/>
<dbReference type="EMBL" id="CP000764">
    <property type="protein sequence ID" value="ABS21624.1"/>
    <property type="molecule type" value="Genomic_DNA"/>
</dbReference>
<dbReference type="RefSeq" id="WP_012093792.1">
    <property type="nucleotide sequence ID" value="NC_009674.1"/>
</dbReference>
<dbReference type="SMR" id="A7GNB6"/>
<dbReference type="STRING" id="315749.Bcer98_1302"/>
<dbReference type="GeneID" id="33896650"/>
<dbReference type="KEGG" id="bcy:Bcer98_1302"/>
<dbReference type="eggNOG" id="COG0503">
    <property type="taxonomic scope" value="Bacteria"/>
</dbReference>
<dbReference type="HOGENOM" id="CLU_099015_0_0_9"/>
<dbReference type="OrthoDB" id="9790678at2"/>
<dbReference type="UniPathway" id="UPA00602">
    <property type="reaction ID" value="UER00658"/>
</dbReference>
<dbReference type="Proteomes" id="UP000002300">
    <property type="component" value="Chromosome"/>
</dbReference>
<dbReference type="GO" id="GO:0005737">
    <property type="term" value="C:cytoplasm"/>
    <property type="evidence" value="ECO:0007669"/>
    <property type="project" value="UniProtKB-SubCell"/>
</dbReference>
<dbReference type="GO" id="GO:0000310">
    <property type="term" value="F:xanthine phosphoribosyltransferase activity"/>
    <property type="evidence" value="ECO:0007669"/>
    <property type="project" value="UniProtKB-UniRule"/>
</dbReference>
<dbReference type="GO" id="GO:0006166">
    <property type="term" value="P:purine ribonucleoside salvage"/>
    <property type="evidence" value="ECO:0007669"/>
    <property type="project" value="UniProtKB-KW"/>
</dbReference>
<dbReference type="GO" id="GO:0046110">
    <property type="term" value="P:xanthine metabolic process"/>
    <property type="evidence" value="ECO:0007669"/>
    <property type="project" value="InterPro"/>
</dbReference>
<dbReference type="GO" id="GO:0032265">
    <property type="term" value="P:XMP salvage"/>
    <property type="evidence" value="ECO:0007669"/>
    <property type="project" value="UniProtKB-UniRule"/>
</dbReference>
<dbReference type="CDD" id="cd06223">
    <property type="entry name" value="PRTases_typeI"/>
    <property type="match status" value="1"/>
</dbReference>
<dbReference type="Gene3D" id="3.40.50.2020">
    <property type="match status" value="1"/>
</dbReference>
<dbReference type="HAMAP" id="MF_01184">
    <property type="entry name" value="XPRTase"/>
    <property type="match status" value="1"/>
</dbReference>
<dbReference type="InterPro" id="IPR000836">
    <property type="entry name" value="PRibTrfase_dom"/>
</dbReference>
<dbReference type="InterPro" id="IPR029057">
    <property type="entry name" value="PRTase-like"/>
</dbReference>
<dbReference type="InterPro" id="IPR050118">
    <property type="entry name" value="Pur/Pyrimidine_PRTase"/>
</dbReference>
<dbReference type="InterPro" id="IPR010079">
    <property type="entry name" value="Xanthine_PRibTrfase"/>
</dbReference>
<dbReference type="NCBIfam" id="NF006671">
    <property type="entry name" value="PRK09219.1"/>
    <property type="match status" value="1"/>
</dbReference>
<dbReference type="NCBIfam" id="TIGR01744">
    <property type="entry name" value="XPRTase"/>
    <property type="match status" value="1"/>
</dbReference>
<dbReference type="PANTHER" id="PTHR43864">
    <property type="entry name" value="HYPOXANTHINE/GUANINE PHOSPHORIBOSYLTRANSFERASE"/>
    <property type="match status" value="1"/>
</dbReference>
<dbReference type="PANTHER" id="PTHR43864:SF1">
    <property type="entry name" value="XANTHINE PHOSPHORIBOSYLTRANSFERASE"/>
    <property type="match status" value="1"/>
</dbReference>
<dbReference type="Pfam" id="PF00156">
    <property type="entry name" value="Pribosyltran"/>
    <property type="match status" value="1"/>
</dbReference>
<dbReference type="SUPFAM" id="SSF53271">
    <property type="entry name" value="PRTase-like"/>
    <property type="match status" value="1"/>
</dbReference>
<sequence>MKVLQEKILSEGKVLSGDVLKVDAFLNHQIDPVLMQEIGKEFAKRFQEEKITKIVTIESSGIAPAVMAALELGVKVIFARKRKSLTLQENMYVANVYSFTKQETNEISLSKKHIHEDDRVLIIDDFLANGQAALGLMSLVEQAGASVSGIGIVIEKAFQDGGKKLRERGVRVESLAEIASLEDGTVTFVQHETAEVR</sequence>
<accession>A7GNB6</accession>
<organism>
    <name type="scientific">Bacillus cytotoxicus (strain DSM 22905 / CIP 110041 / 391-98 / NVH 391-98)</name>
    <dbReference type="NCBI Taxonomy" id="315749"/>
    <lineage>
        <taxon>Bacteria</taxon>
        <taxon>Bacillati</taxon>
        <taxon>Bacillota</taxon>
        <taxon>Bacilli</taxon>
        <taxon>Bacillales</taxon>
        <taxon>Bacillaceae</taxon>
        <taxon>Bacillus</taxon>
        <taxon>Bacillus cereus group</taxon>
    </lineage>
</organism>
<proteinExistence type="inferred from homology"/>
<name>XPT_BACCN</name>
<feature type="chain" id="PRO_0000339663" description="Xanthine phosphoribosyltransferase">
    <location>
        <begin position="1"/>
        <end position="197"/>
    </location>
</feature>
<feature type="binding site" evidence="1">
    <location>
        <position position="20"/>
    </location>
    <ligand>
        <name>xanthine</name>
        <dbReference type="ChEBI" id="CHEBI:17712"/>
    </ligand>
</feature>
<feature type="binding site" evidence="1">
    <location>
        <position position="27"/>
    </location>
    <ligand>
        <name>xanthine</name>
        <dbReference type="ChEBI" id="CHEBI:17712"/>
    </ligand>
</feature>
<feature type="binding site" evidence="1">
    <location>
        <begin position="128"/>
        <end position="132"/>
    </location>
    <ligand>
        <name>5-phospho-alpha-D-ribose 1-diphosphate</name>
        <dbReference type="ChEBI" id="CHEBI:58017"/>
    </ligand>
</feature>
<feature type="binding site" evidence="1">
    <location>
        <position position="156"/>
    </location>
    <ligand>
        <name>xanthine</name>
        <dbReference type="ChEBI" id="CHEBI:17712"/>
    </ligand>
</feature>
<evidence type="ECO:0000255" key="1">
    <source>
        <dbReference type="HAMAP-Rule" id="MF_01184"/>
    </source>
</evidence>
<keyword id="KW-0963">Cytoplasm</keyword>
<keyword id="KW-0328">Glycosyltransferase</keyword>
<keyword id="KW-0660">Purine salvage</keyword>
<keyword id="KW-0808">Transferase</keyword>
<gene>
    <name evidence="1" type="primary">xpt</name>
    <name type="ordered locus">Bcer98_1302</name>
</gene>
<comment type="function">
    <text evidence="1">Converts the preformed base xanthine, a product of nucleic acid breakdown, to xanthosine 5'-monophosphate (XMP), so it can be reused for RNA or DNA synthesis.</text>
</comment>
<comment type="catalytic activity">
    <reaction evidence="1">
        <text>XMP + diphosphate = xanthine + 5-phospho-alpha-D-ribose 1-diphosphate</text>
        <dbReference type="Rhea" id="RHEA:10800"/>
        <dbReference type="ChEBI" id="CHEBI:17712"/>
        <dbReference type="ChEBI" id="CHEBI:33019"/>
        <dbReference type="ChEBI" id="CHEBI:57464"/>
        <dbReference type="ChEBI" id="CHEBI:58017"/>
        <dbReference type="EC" id="2.4.2.22"/>
    </reaction>
</comment>
<comment type="pathway">
    <text evidence="1">Purine metabolism; XMP biosynthesis via salvage pathway; XMP from xanthine: step 1/1.</text>
</comment>
<comment type="subunit">
    <text evidence="1">Homodimer.</text>
</comment>
<comment type="subcellular location">
    <subcellularLocation>
        <location evidence="1">Cytoplasm</location>
    </subcellularLocation>
</comment>
<comment type="similarity">
    <text evidence="1">Belongs to the purine/pyrimidine phosphoribosyltransferase family. Xpt subfamily.</text>
</comment>
<protein>
    <recommendedName>
        <fullName evidence="1">Xanthine phosphoribosyltransferase</fullName>
        <shortName evidence="1">XPRTase</shortName>
        <ecNumber evidence="1">2.4.2.22</ecNumber>
    </recommendedName>
</protein>